<organism>
    <name type="scientific">Glycine max</name>
    <name type="common">Soybean</name>
    <name type="synonym">Glycine hispida</name>
    <dbReference type="NCBI Taxonomy" id="3847"/>
    <lineage>
        <taxon>Eukaryota</taxon>
        <taxon>Viridiplantae</taxon>
        <taxon>Streptophyta</taxon>
        <taxon>Embryophyta</taxon>
        <taxon>Tracheophyta</taxon>
        <taxon>Spermatophyta</taxon>
        <taxon>Magnoliopsida</taxon>
        <taxon>eudicotyledons</taxon>
        <taxon>Gunneridae</taxon>
        <taxon>Pentapetalae</taxon>
        <taxon>rosids</taxon>
        <taxon>fabids</taxon>
        <taxon>Fabales</taxon>
        <taxon>Fabaceae</taxon>
        <taxon>Papilionoideae</taxon>
        <taxon>50 kb inversion clade</taxon>
        <taxon>NPAAA clade</taxon>
        <taxon>indigoferoid/millettioid clade</taxon>
        <taxon>Phaseoleae</taxon>
        <taxon>Glycine</taxon>
        <taxon>Glycine subgen. Soja</taxon>
    </lineage>
</organism>
<dbReference type="EC" id="7.1.1.-" evidence="1"/>
<dbReference type="EMBL" id="DQ317523">
    <property type="protein sequence ID" value="ABC25173.1"/>
    <property type="molecule type" value="Genomic_DNA"/>
</dbReference>
<dbReference type="RefSeq" id="YP_538814.1">
    <property type="nucleotide sequence ID" value="NC_007942.1"/>
</dbReference>
<dbReference type="SMR" id="Q2PMN6"/>
<dbReference type="FunCoup" id="Q2PMN6">
    <property type="interactions" value="95"/>
</dbReference>
<dbReference type="STRING" id="3847.Q2PMN6"/>
<dbReference type="PaxDb" id="3847-GLYMA18G32231.1"/>
<dbReference type="GeneID" id="3989357"/>
<dbReference type="KEGG" id="gmx:3989357"/>
<dbReference type="eggNOG" id="KOG3256">
    <property type="taxonomic scope" value="Eukaryota"/>
</dbReference>
<dbReference type="InParanoid" id="Q2PMN6"/>
<dbReference type="Proteomes" id="UP000008827">
    <property type="component" value="Chloroplast"/>
</dbReference>
<dbReference type="GO" id="GO:0009535">
    <property type="term" value="C:chloroplast thylakoid membrane"/>
    <property type="evidence" value="ECO:0007669"/>
    <property type="project" value="UniProtKB-SubCell"/>
</dbReference>
<dbReference type="GO" id="GO:0051539">
    <property type="term" value="F:4 iron, 4 sulfur cluster binding"/>
    <property type="evidence" value="ECO:0007669"/>
    <property type="project" value="UniProtKB-KW"/>
</dbReference>
<dbReference type="GO" id="GO:0005506">
    <property type="term" value="F:iron ion binding"/>
    <property type="evidence" value="ECO:0007669"/>
    <property type="project" value="UniProtKB-UniRule"/>
</dbReference>
<dbReference type="GO" id="GO:0008137">
    <property type="term" value="F:NADH dehydrogenase (ubiquinone) activity"/>
    <property type="evidence" value="ECO:0007669"/>
    <property type="project" value="InterPro"/>
</dbReference>
<dbReference type="GO" id="GO:0048038">
    <property type="term" value="F:quinone binding"/>
    <property type="evidence" value="ECO:0007669"/>
    <property type="project" value="UniProtKB-KW"/>
</dbReference>
<dbReference type="GO" id="GO:0019684">
    <property type="term" value="P:photosynthesis, light reaction"/>
    <property type="evidence" value="ECO:0007669"/>
    <property type="project" value="UniProtKB-UniRule"/>
</dbReference>
<dbReference type="FunFam" id="3.30.70.3270:FF:000006">
    <property type="entry name" value="NAD(P)H-quinone oxidoreductase subunit I, chloroplastic"/>
    <property type="match status" value="1"/>
</dbReference>
<dbReference type="Gene3D" id="3.30.70.3270">
    <property type="match status" value="1"/>
</dbReference>
<dbReference type="HAMAP" id="MF_01351">
    <property type="entry name" value="NDH1_NuoI"/>
    <property type="match status" value="1"/>
</dbReference>
<dbReference type="InterPro" id="IPR017896">
    <property type="entry name" value="4Fe4S_Fe-S-bd"/>
</dbReference>
<dbReference type="InterPro" id="IPR017900">
    <property type="entry name" value="4Fe4S_Fe_S_CS"/>
</dbReference>
<dbReference type="InterPro" id="IPR010226">
    <property type="entry name" value="NADH_quinone_OxRdtase_chainI"/>
</dbReference>
<dbReference type="InterPro" id="IPR004497">
    <property type="entry name" value="NDHI"/>
</dbReference>
<dbReference type="NCBIfam" id="TIGR00403">
    <property type="entry name" value="ndhI"/>
    <property type="match status" value="1"/>
</dbReference>
<dbReference type="NCBIfam" id="TIGR01971">
    <property type="entry name" value="NuoI"/>
    <property type="match status" value="1"/>
</dbReference>
<dbReference type="NCBIfam" id="NF004537">
    <property type="entry name" value="PRK05888.1-3"/>
    <property type="match status" value="1"/>
</dbReference>
<dbReference type="PANTHER" id="PTHR47275">
    <property type="entry name" value="NAD(P)H-QUINONE OXIDOREDUCTASE SUBUNIT I, CHLOROPLASTIC"/>
    <property type="match status" value="1"/>
</dbReference>
<dbReference type="PANTHER" id="PTHR47275:SF1">
    <property type="entry name" value="NAD(P)H-QUINONE OXIDOREDUCTASE SUBUNIT I, CHLOROPLASTIC"/>
    <property type="match status" value="1"/>
</dbReference>
<dbReference type="Pfam" id="PF12838">
    <property type="entry name" value="Fer4_7"/>
    <property type="match status" value="1"/>
</dbReference>
<dbReference type="SUPFAM" id="SSF54862">
    <property type="entry name" value="4Fe-4S ferredoxins"/>
    <property type="match status" value="1"/>
</dbReference>
<dbReference type="PROSITE" id="PS00198">
    <property type="entry name" value="4FE4S_FER_1"/>
    <property type="match status" value="2"/>
</dbReference>
<dbReference type="PROSITE" id="PS51379">
    <property type="entry name" value="4FE4S_FER_2"/>
    <property type="match status" value="2"/>
</dbReference>
<geneLocation type="chloroplast"/>
<feature type="chain" id="PRO_0000245675" description="NAD(P)H-quinone oxidoreductase subunit I, chloroplastic">
    <location>
        <begin position="1"/>
        <end position="163"/>
    </location>
</feature>
<feature type="domain" description="4Fe-4S ferredoxin-type 1" evidence="1">
    <location>
        <begin position="55"/>
        <end position="84"/>
    </location>
</feature>
<feature type="domain" description="4Fe-4S ferredoxin-type 2" evidence="1">
    <location>
        <begin position="95"/>
        <end position="124"/>
    </location>
</feature>
<feature type="binding site" evidence="1">
    <location>
        <position position="64"/>
    </location>
    <ligand>
        <name>[4Fe-4S] cluster</name>
        <dbReference type="ChEBI" id="CHEBI:49883"/>
        <label>1</label>
    </ligand>
</feature>
<feature type="binding site" evidence="1">
    <location>
        <position position="67"/>
    </location>
    <ligand>
        <name>[4Fe-4S] cluster</name>
        <dbReference type="ChEBI" id="CHEBI:49883"/>
        <label>1</label>
    </ligand>
</feature>
<feature type="binding site" evidence="1">
    <location>
        <position position="70"/>
    </location>
    <ligand>
        <name>[4Fe-4S] cluster</name>
        <dbReference type="ChEBI" id="CHEBI:49883"/>
        <label>1</label>
    </ligand>
</feature>
<feature type="binding site" evidence="1">
    <location>
        <position position="74"/>
    </location>
    <ligand>
        <name>[4Fe-4S] cluster</name>
        <dbReference type="ChEBI" id="CHEBI:49883"/>
        <label>2</label>
    </ligand>
</feature>
<feature type="binding site" evidence="1">
    <location>
        <position position="104"/>
    </location>
    <ligand>
        <name>[4Fe-4S] cluster</name>
        <dbReference type="ChEBI" id="CHEBI:49883"/>
        <label>2</label>
    </ligand>
</feature>
<feature type="binding site" evidence="1">
    <location>
        <position position="107"/>
    </location>
    <ligand>
        <name>[4Fe-4S] cluster</name>
        <dbReference type="ChEBI" id="CHEBI:49883"/>
        <label>2</label>
    </ligand>
</feature>
<feature type="binding site" evidence="1">
    <location>
        <position position="110"/>
    </location>
    <ligand>
        <name>[4Fe-4S] cluster</name>
        <dbReference type="ChEBI" id="CHEBI:49883"/>
        <label>2</label>
    </ligand>
</feature>
<feature type="binding site" evidence="1">
    <location>
        <position position="114"/>
    </location>
    <ligand>
        <name>[4Fe-4S] cluster</name>
        <dbReference type="ChEBI" id="CHEBI:49883"/>
        <label>1</label>
    </ligand>
</feature>
<evidence type="ECO:0000255" key="1">
    <source>
        <dbReference type="HAMAP-Rule" id="MF_01351"/>
    </source>
</evidence>
<accession>Q2PMN6</accession>
<protein>
    <recommendedName>
        <fullName evidence="1">NAD(P)H-quinone oxidoreductase subunit I, chloroplastic</fullName>
        <ecNumber evidence="1">7.1.1.-</ecNumber>
    </recommendedName>
    <alternativeName>
        <fullName evidence="1">NAD(P)H dehydrogenase subunit I</fullName>
        <shortName evidence="1">NDH subunit I</shortName>
    </alternativeName>
    <alternativeName>
        <fullName evidence="1">NADH-plastoquinone oxidoreductase subunit I</fullName>
    </alternativeName>
</protein>
<sequence>MFLMVSGFINYSQQTVRAARYIGQGFTITLSHANRLPVTIQYPYEKIISSERFRGRIHFEFDKCIACEVCVRVCPIDLPVVDWKLETDIRKKQLLNYSIDFGICIFCGNCIEYCPTNCLSMTEEYELSTYDRHELNYNQIALGRLPVSVIDDYTIRTIQIKFN</sequence>
<reference key="1">
    <citation type="journal article" date="2005" name="Plant Mol. Biol.">
        <title>Complete chloroplast genome sequence of Glycine max and comparative analyses with other legume genomes.</title>
        <authorList>
            <person name="Saski C."/>
            <person name="Lee S.-B."/>
            <person name="Daniell H."/>
            <person name="Wood T.C."/>
            <person name="Tomkins J."/>
            <person name="Kim H.-G."/>
            <person name="Jansen R.K."/>
        </authorList>
    </citation>
    <scope>NUCLEOTIDE SEQUENCE [LARGE SCALE GENOMIC DNA]</scope>
    <source>
        <strain>cv. PI 437654</strain>
    </source>
</reference>
<gene>
    <name evidence="1" type="primary">ndhI</name>
</gene>
<comment type="function">
    <text evidence="1">NDH shuttles electrons from NAD(P)H:plastoquinone, via FMN and iron-sulfur (Fe-S) centers, to quinones in the photosynthetic chain and possibly in a chloroplast respiratory chain. The immediate electron acceptor for the enzyme in this species is believed to be plastoquinone. Couples the redox reaction to proton translocation, and thus conserves the redox energy in a proton gradient.</text>
</comment>
<comment type="catalytic activity">
    <reaction evidence="1">
        <text>a plastoquinone + NADH + (n+1) H(+)(in) = a plastoquinol + NAD(+) + n H(+)(out)</text>
        <dbReference type="Rhea" id="RHEA:42608"/>
        <dbReference type="Rhea" id="RHEA-COMP:9561"/>
        <dbReference type="Rhea" id="RHEA-COMP:9562"/>
        <dbReference type="ChEBI" id="CHEBI:15378"/>
        <dbReference type="ChEBI" id="CHEBI:17757"/>
        <dbReference type="ChEBI" id="CHEBI:57540"/>
        <dbReference type="ChEBI" id="CHEBI:57945"/>
        <dbReference type="ChEBI" id="CHEBI:62192"/>
    </reaction>
</comment>
<comment type="catalytic activity">
    <reaction evidence="1">
        <text>a plastoquinone + NADPH + (n+1) H(+)(in) = a plastoquinol + NADP(+) + n H(+)(out)</text>
        <dbReference type="Rhea" id="RHEA:42612"/>
        <dbReference type="Rhea" id="RHEA-COMP:9561"/>
        <dbReference type="Rhea" id="RHEA-COMP:9562"/>
        <dbReference type="ChEBI" id="CHEBI:15378"/>
        <dbReference type="ChEBI" id="CHEBI:17757"/>
        <dbReference type="ChEBI" id="CHEBI:57783"/>
        <dbReference type="ChEBI" id="CHEBI:58349"/>
        <dbReference type="ChEBI" id="CHEBI:62192"/>
    </reaction>
</comment>
<comment type="cofactor">
    <cofactor evidence="1">
        <name>[4Fe-4S] cluster</name>
        <dbReference type="ChEBI" id="CHEBI:49883"/>
    </cofactor>
    <text evidence="1">Binds 2 [4Fe-4S] clusters per subunit.</text>
</comment>
<comment type="subunit">
    <text evidence="1">NDH is composed of at least 16 different subunits, 5 of which are encoded in the nucleus.</text>
</comment>
<comment type="subcellular location">
    <subcellularLocation>
        <location evidence="1">Plastid</location>
        <location evidence="1">Chloroplast thylakoid membrane</location>
        <topology evidence="1">Peripheral membrane protein</topology>
    </subcellularLocation>
</comment>
<comment type="similarity">
    <text evidence="1">Belongs to the complex I 23 kDa subunit family.</text>
</comment>
<keyword id="KW-0004">4Fe-4S</keyword>
<keyword id="KW-0150">Chloroplast</keyword>
<keyword id="KW-0408">Iron</keyword>
<keyword id="KW-0411">Iron-sulfur</keyword>
<keyword id="KW-0472">Membrane</keyword>
<keyword id="KW-0479">Metal-binding</keyword>
<keyword id="KW-0520">NAD</keyword>
<keyword id="KW-0521">NADP</keyword>
<keyword id="KW-0934">Plastid</keyword>
<keyword id="KW-0618">Plastoquinone</keyword>
<keyword id="KW-0874">Quinone</keyword>
<keyword id="KW-1185">Reference proteome</keyword>
<keyword id="KW-0677">Repeat</keyword>
<keyword id="KW-0793">Thylakoid</keyword>
<keyword id="KW-1278">Translocase</keyword>
<proteinExistence type="inferred from homology"/>
<name>NDHI_SOYBN</name>